<gene>
    <name type="primary">speA</name>
    <name type="ordered locus">Z4283</name>
    <name type="ordered locus">ECs3814</name>
</gene>
<proteinExistence type="inferred from homology"/>
<keyword id="KW-0210">Decarboxylase</keyword>
<keyword id="KW-0456">Lyase</keyword>
<keyword id="KW-0460">Magnesium</keyword>
<keyword id="KW-0479">Metal-binding</keyword>
<keyword id="KW-0574">Periplasm</keyword>
<keyword id="KW-0620">Polyamine biosynthesis</keyword>
<keyword id="KW-0661">Putrescine biosynthesis</keyword>
<keyword id="KW-0663">Pyridoxal phosphate</keyword>
<keyword id="KW-1185">Reference proteome</keyword>
<keyword id="KW-0745">Spermidine biosynthesis</keyword>
<dbReference type="EC" id="4.1.1.19"/>
<dbReference type="EMBL" id="AE005174">
    <property type="protein sequence ID" value="AAG58069.1"/>
    <property type="molecule type" value="Genomic_DNA"/>
</dbReference>
<dbReference type="EMBL" id="BA000007">
    <property type="protein sequence ID" value="BAB37237.1"/>
    <property type="molecule type" value="Genomic_DNA"/>
</dbReference>
<dbReference type="PIR" id="A85951">
    <property type="entry name" value="A85951"/>
</dbReference>
<dbReference type="PIR" id="F91105">
    <property type="entry name" value="F91105"/>
</dbReference>
<dbReference type="RefSeq" id="NP_311841.1">
    <property type="nucleotide sequence ID" value="NC_002695.1"/>
</dbReference>
<dbReference type="RefSeq" id="WP_001295380.1">
    <property type="nucleotide sequence ID" value="NZ_VOAI01000003.1"/>
</dbReference>
<dbReference type="SMR" id="Q8XCX9"/>
<dbReference type="STRING" id="155864.Z4283"/>
<dbReference type="GeneID" id="916366"/>
<dbReference type="GeneID" id="93779057"/>
<dbReference type="KEGG" id="ece:Z4283"/>
<dbReference type="KEGG" id="ecs:ECs_3814"/>
<dbReference type="PATRIC" id="fig|386585.9.peg.3981"/>
<dbReference type="eggNOG" id="COG1166">
    <property type="taxonomic scope" value="Bacteria"/>
</dbReference>
<dbReference type="HOGENOM" id="CLU_027243_1_0_6"/>
<dbReference type="OMA" id="AVEYTQH"/>
<dbReference type="UniPathway" id="UPA00186">
    <property type="reaction ID" value="UER00284"/>
</dbReference>
<dbReference type="Proteomes" id="UP000000558">
    <property type="component" value="Chromosome"/>
</dbReference>
<dbReference type="Proteomes" id="UP000002519">
    <property type="component" value="Chromosome"/>
</dbReference>
<dbReference type="GO" id="GO:0042597">
    <property type="term" value="C:periplasmic space"/>
    <property type="evidence" value="ECO:0007669"/>
    <property type="project" value="UniProtKB-SubCell"/>
</dbReference>
<dbReference type="GO" id="GO:0008792">
    <property type="term" value="F:arginine decarboxylase activity"/>
    <property type="evidence" value="ECO:0007669"/>
    <property type="project" value="UniProtKB-UniRule"/>
</dbReference>
<dbReference type="GO" id="GO:0046872">
    <property type="term" value="F:metal ion binding"/>
    <property type="evidence" value="ECO:0007669"/>
    <property type="project" value="UniProtKB-KW"/>
</dbReference>
<dbReference type="GO" id="GO:0006527">
    <property type="term" value="P:arginine catabolic process"/>
    <property type="evidence" value="ECO:0007669"/>
    <property type="project" value="InterPro"/>
</dbReference>
<dbReference type="GO" id="GO:0033388">
    <property type="term" value="P:putrescine biosynthetic process from arginine"/>
    <property type="evidence" value="ECO:0007669"/>
    <property type="project" value="TreeGrafter"/>
</dbReference>
<dbReference type="GO" id="GO:0008295">
    <property type="term" value="P:spermidine biosynthetic process"/>
    <property type="evidence" value="ECO:0007669"/>
    <property type="project" value="UniProtKB-UniRule"/>
</dbReference>
<dbReference type="CDD" id="cd06830">
    <property type="entry name" value="PLPDE_III_ADC"/>
    <property type="match status" value="1"/>
</dbReference>
<dbReference type="FunFam" id="1.10.287.3440:FF:000001">
    <property type="entry name" value="Biosynthetic arginine decarboxylase"/>
    <property type="match status" value="1"/>
</dbReference>
<dbReference type="FunFam" id="1.20.58.930:FF:000001">
    <property type="entry name" value="Biosynthetic arginine decarboxylase"/>
    <property type="match status" value="1"/>
</dbReference>
<dbReference type="FunFam" id="2.40.37.10:FF:000001">
    <property type="entry name" value="Biosynthetic arginine decarboxylase"/>
    <property type="match status" value="1"/>
</dbReference>
<dbReference type="FunFam" id="3.20.20.10:FF:000001">
    <property type="entry name" value="Biosynthetic arginine decarboxylase"/>
    <property type="match status" value="1"/>
</dbReference>
<dbReference type="Gene3D" id="1.10.287.3440">
    <property type="match status" value="1"/>
</dbReference>
<dbReference type="Gene3D" id="1.20.58.930">
    <property type="match status" value="1"/>
</dbReference>
<dbReference type="Gene3D" id="3.20.20.10">
    <property type="entry name" value="Alanine racemase"/>
    <property type="match status" value="1"/>
</dbReference>
<dbReference type="Gene3D" id="2.40.37.10">
    <property type="entry name" value="Lyase, Ornithine Decarboxylase, Chain A, domain 1"/>
    <property type="match status" value="1"/>
</dbReference>
<dbReference type="HAMAP" id="MF_01417">
    <property type="entry name" value="SpeA"/>
    <property type="match status" value="1"/>
</dbReference>
<dbReference type="InterPro" id="IPR009006">
    <property type="entry name" value="Ala_racemase/Decarboxylase_C"/>
</dbReference>
<dbReference type="InterPro" id="IPR040634">
    <property type="entry name" value="Arg_decarb_HB"/>
</dbReference>
<dbReference type="InterPro" id="IPR041128">
    <property type="entry name" value="Arg_decarbox_C"/>
</dbReference>
<dbReference type="InterPro" id="IPR002985">
    <property type="entry name" value="Arg_decrbxlase"/>
</dbReference>
<dbReference type="InterPro" id="IPR022657">
    <property type="entry name" value="De-COase2_CS"/>
</dbReference>
<dbReference type="InterPro" id="IPR022644">
    <property type="entry name" value="De-COase2_N"/>
</dbReference>
<dbReference type="InterPro" id="IPR022653">
    <property type="entry name" value="De-COase2_pyr-phos_BS"/>
</dbReference>
<dbReference type="InterPro" id="IPR000183">
    <property type="entry name" value="Orn/DAP/Arg_de-COase"/>
</dbReference>
<dbReference type="InterPro" id="IPR029066">
    <property type="entry name" value="PLP-binding_barrel"/>
</dbReference>
<dbReference type="NCBIfam" id="NF003763">
    <property type="entry name" value="PRK05354.1"/>
    <property type="match status" value="1"/>
</dbReference>
<dbReference type="NCBIfam" id="TIGR01273">
    <property type="entry name" value="speA"/>
    <property type="match status" value="1"/>
</dbReference>
<dbReference type="PANTHER" id="PTHR43295">
    <property type="entry name" value="ARGININE DECARBOXYLASE"/>
    <property type="match status" value="1"/>
</dbReference>
<dbReference type="PANTHER" id="PTHR43295:SF9">
    <property type="entry name" value="BIOSYNTHETIC ARGININE DECARBOXYLASE"/>
    <property type="match status" value="1"/>
</dbReference>
<dbReference type="Pfam" id="PF17810">
    <property type="entry name" value="Arg_decarb_HB"/>
    <property type="match status" value="1"/>
</dbReference>
<dbReference type="Pfam" id="PF17944">
    <property type="entry name" value="Arg_decarbox_C"/>
    <property type="match status" value="1"/>
</dbReference>
<dbReference type="Pfam" id="PF02784">
    <property type="entry name" value="Orn_Arg_deC_N"/>
    <property type="match status" value="1"/>
</dbReference>
<dbReference type="PIRSF" id="PIRSF001336">
    <property type="entry name" value="Arg_decrbxlase"/>
    <property type="match status" value="1"/>
</dbReference>
<dbReference type="PRINTS" id="PR01180">
    <property type="entry name" value="ARGDCRBXLASE"/>
</dbReference>
<dbReference type="PRINTS" id="PR01179">
    <property type="entry name" value="ODADCRBXLASE"/>
</dbReference>
<dbReference type="SUPFAM" id="SSF50621">
    <property type="entry name" value="Alanine racemase C-terminal domain-like"/>
    <property type="match status" value="1"/>
</dbReference>
<dbReference type="SUPFAM" id="SSF51419">
    <property type="entry name" value="PLP-binding barrel"/>
    <property type="match status" value="1"/>
</dbReference>
<dbReference type="PROSITE" id="PS00878">
    <property type="entry name" value="ODR_DC_2_1"/>
    <property type="match status" value="1"/>
</dbReference>
<dbReference type="PROSITE" id="PS00879">
    <property type="entry name" value="ODR_DC_2_2"/>
    <property type="match status" value="1"/>
</dbReference>
<comment type="function">
    <text evidence="1">Catalyzes the biosynthesis of agmatine from arginine.</text>
</comment>
<comment type="catalytic activity">
    <reaction>
        <text>L-arginine + H(+) = agmatine + CO2</text>
        <dbReference type="Rhea" id="RHEA:17641"/>
        <dbReference type="ChEBI" id="CHEBI:15378"/>
        <dbReference type="ChEBI" id="CHEBI:16526"/>
        <dbReference type="ChEBI" id="CHEBI:32682"/>
        <dbReference type="ChEBI" id="CHEBI:58145"/>
        <dbReference type="EC" id="4.1.1.19"/>
    </reaction>
</comment>
<comment type="cofactor">
    <cofactor evidence="1">
        <name>Mg(2+)</name>
        <dbReference type="ChEBI" id="CHEBI:18420"/>
    </cofactor>
</comment>
<comment type="cofactor">
    <cofactor evidence="1">
        <name>pyridoxal 5'-phosphate</name>
        <dbReference type="ChEBI" id="CHEBI:597326"/>
    </cofactor>
</comment>
<comment type="pathway">
    <text>Amine and polyamine biosynthesis; agmatine biosynthesis; agmatine from L-arginine: step 1/1.</text>
</comment>
<comment type="subunit">
    <text evidence="1">Homotetramer.</text>
</comment>
<comment type="subcellular location">
    <subcellularLocation>
        <location evidence="1">Periplasm</location>
    </subcellularLocation>
</comment>
<comment type="similarity">
    <text evidence="3">Belongs to the Orn/Lys/Arg decarboxylase class-II family. SpeA subfamily.</text>
</comment>
<feature type="chain" id="PRO_0000149962" description="Biosynthetic arginine decarboxylase">
    <location>
        <begin position="1"/>
        <end position="658"/>
    </location>
</feature>
<feature type="binding site" evidence="2">
    <location>
        <begin position="307"/>
        <end position="317"/>
    </location>
    <ligand>
        <name>substrate</name>
    </ligand>
</feature>
<feature type="modified residue" description="N6-(pyridoxal phosphate)lysine" evidence="1">
    <location>
        <position position="127"/>
    </location>
</feature>
<name>SPEA_ECO57</name>
<accession>Q8XCX9</accession>
<sequence length="658" mass="73886">MSDDMSMGLPSSAGEHGVLRSMQEVAMSSQEASKMLRTYNIAWWGNNYYDVNELGHISVCPDPDVPEARVDLAQLVKTREAQGQRLPALFCFPQILQHRLRSINAAFKRARESYGYNGDYFLVYPIKVNQHRRVIESLIHSGEPLGLEAGSKAELMAVLAHAGMTRSVIVCNGYKDREYIRLALIGEKMGHKVYLVIEKMSEIAIVLDEAERLNVVPRLGVRARLASQGSGKWQSSGGEKSKFGLAATQVLQLVETLREAGRLDSLQLLHFHLGSQMANIRDIATGVRESARFYVELHKLGVNIQCFDVGGGLGVDYEGTRSQSDCSVNYGLNEYANNIIWAIGDACEENGLPHPTVITESGRAVTAHHTVLVSNIIGVERNEYTVPTAPAEDAPRALQSMWETWQEMHEPGTRRSLREWLHDSQMDLHDIHIGYSSGTFSLQERAWAEQLYLSMCHEVQKQLDPQNRAHRPIIDELQERMADKMYVNFSLFQSMPDAWGIDQLFPVLPLEGLDQVPERRAVLLDITCDSDGAIDHYIDGDGIATTMPMPEYDPENPPMLGFFMVGAYQEILGNMHNLFGDTEAVDVFVFPDGSVEVELSDEGDTVADMLQYVQLDPKTLLTQFRDQVKKTDLDAELQQQFLEEFEAGLYGYTYLEDE</sequence>
<evidence type="ECO:0000250" key="1"/>
<evidence type="ECO:0000255" key="2"/>
<evidence type="ECO:0000305" key="3"/>
<protein>
    <recommendedName>
        <fullName>Biosynthetic arginine decarboxylase</fullName>
        <shortName>ADC</shortName>
        <ecNumber>4.1.1.19</ecNumber>
    </recommendedName>
</protein>
<reference key="1">
    <citation type="journal article" date="2001" name="Nature">
        <title>Genome sequence of enterohaemorrhagic Escherichia coli O157:H7.</title>
        <authorList>
            <person name="Perna N.T."/>
            <person name="Plunkett G. III"/>
            <person name="Burland V."/>
            <person name="Mau B."/>
            <person name="Glasner J.D."/>
            <person name="Rose D.J."/>
            <person name="Mayhew G.F."/>
            <person name="Evans P.S."/>
            <person name="Gregor J."/>
            <person name="Kirkpatrick H.A."/>
            <person name="Posfai G."/>
            <person name="Hackett J."/>
            <person name="Klink S."/>
            <person name="Boutin A."/>
            <person name="Shao Y."/>
            <person name="Miller L."/>
            <person name="Grotbeck E.J."/>
            <person name="Davis N.W."/>
            <person name="Lim A."/>
            <person name="Dimalanta E.T."/>
            <person name="Potamousis K."/>
            <person name="Apodaca J."/>
            <person name="Anantharaman T.S."/>
            <person name="Lin J."/>
            <person name="Yen G."/>
            <person name="Schwartz D.C."/>
            <person name="Welch R.A."/>
            <person name="Blattner F.R."/>
        </authorList>
    </citation>
    <scope>NUCLEOTIDE SEQUENCE [LARGE SCALE GENOMIC DNA]</scope>
    <source>
        <strain>O157:H7 / EDL933 / ATCC 700927 / EHEC</strain>
    </source>
</reference>
<reference key="2">
    <citation type="journal article" date="2001" name="DNA Res.">
        <title>Complete genome sequence of enterohemorrhagic Escherichia coli O157:H7 and genomic comparison with a laboratory strain K-12.</title>
        <authorList>
            <person name="Hayashi T."/>
            <person name="Makino K."/>
            <person name="Ohnishi M."/>
            <person name="Kurokawa K."/>
            <person name="Ishii K."/>
            <person name="Yokoyama K."/>
            <person name="Han C.-G."/>
            <person name="Ohtsubo E."/>
            <person name="Nakayama K."/>
            <person name="Murata T."/>
            <person name="Tanaka M."/>
            <person name="Tobe T."/>
            <person name="Iida T."/>
            <person name="Takami H."/>
            <person name="Honda T."/>
            <person name="Sasakawa C."/>
            <person name="Ogasawara N."/>
            <person name="Yasunaga T."/>
            <person name="Kuhara S."/>
            <person name="Shiba T."/>
            <person name="Hattori M."/>
            <person name="Shinagawa H."/>
        </authorList>
    </citation>
    <scope>NUCLEOTIDE SEQUENCE [LARGE SCALE GENOMIC DNA]</scope>
    <source>
        <strain>O157:H7 / Sakai / RIMD 0509952 / EHEC</strain>
    </source>
</reference>
<organism>
    <name type="scientific">Escherichia coli O157:H7</name>
    <dbReference type="NCBI Taxonomy" id="83334"/>
    <lineage>
        <taxon>Bacteria</taxon>
        <taxon>Pseudomonadati</taxon>
        <taxon>Pseudomonadota</taxon>
        <taxon>Gammaproteobacteria</taxon>
        <taxon>Enterobacterales</taxon>
        <taxon>Enterobacteriaceae</taxon>
        <taxon>Escherichia</taxon>
    </lineage>
</organism>